<evidence type="ECO:0000255" key="1">
    <source>
        <dbReference type="HAMAP-Rule" id="MF_00121"/>
    </source>
</evidence>
<protein>
    <recommendedName>
        <fullName evidence="1">Aspartyl/glutamyl-tRNA(Asn/Gln) amidotransferase subunit B</fullName>
        <shortName evidence="1">Asp/Glu-ADT subunit B</shortName>
        <ecNumber evidence="1">6.3.5.-</ecNumber>
    </recommendedName>
</protein>
<sequence>MSKYETVIGLEVHAELSTNSKIFCGCPTEFGAPPNTHTCPICLGHPGVLPVTNKQAVEFAMKAALALNCEISRETKFDRKNYFYPDSPKAYQISQFDQPIGYNGWIDIEVNGETKRIGITRLHLEEDAGKLTHSDFGGESLVDFNRVGVPLVEIVSEPDIRTPEEARAYLEKLKAIIQYTEVSDVRMEQGSLRCDANVSIRPYGQEEFGTKAELKNMNSFRNVQMGLEYEVLRQTEVVSSGGKVVQETRRWDEANKKTLTMRSKEEAHDYRYFPDPDLVRMQISEEWIEAVRATIPELPDARQARYVNEFGLSKDDAGVITISKETADFFDETVKTGAEPKSVANWLMVDLLAHLNANNLVFADVKMTPKGLGEMIKLIEDGTISSKIAKTVFKEMVETGKEPKQIVEEKGLVQISDEGALRQVVVDAVNSNPQAVADFKSGNEKAAAFFVGQVMKQTKGKANPGMVNKLIQEVLNSL</sequence>
<reference key="1">
    <citation type="submission" date="2005-03" db="EMBL/GenBank/DDBJ databases">
        <title>Brevibacillus brevis strain 47, complete genome.</title>
        <authorList>
            <person name="Hosoyama A."/>
            <person name="Yamada R."/>
            <person name="Hongo Y."/>
            <person name="Terui Y."/>
            <person name="Ankai A."/>
            <person name="Masuyama W."/>
            <person name="Sekiguchi M."/>
            <person name="Takeda T."/>
            <person name="Asano K."/>
            <person name="Ohji S."/>
            <person name="Ichikawa N."/>
            <person name="Narita S."/>
            <person name="Aoki N."/>
            <person name="Miura H."/>
            <person name="Matsushita S."/>
            <person name="Sekigawa T."/>
            <person name="Yamagata H."/>
            <person name="Yoshikawa H."/>
            <person name="Udaka S."/>
            <person name="Tanikawa S."/>
            <person name="Fujita N."/>
        </authorList>
    </citation>
    <scope>NUCLEOTIDE SEQUENCE [LARGE SCALE GENOMIC DNA]</scope>
    <source>
        <strain>47 / JCM 6285 / NBRC 100599</strain>
    </source>
</reference>
<feature type="chain" id="PRO_1000122513" description="Aspartyl/glutamyl-tRNA(Asn/Gln) amidotransferase subunit B">
    <location>
        <begin position="1"/>
        <end position="478"/>
    </location>
</feature>
<dbReference type="EC" id="6.3.5.-" evidence="1"/>
<dbReference type="EMBL" id="AP008955">
    <property type="protein sequence ID" value="BAH41672.1"/>
    <property type="molecule type" value="Genomic_DNA"/>
</dbReference>
<dbReference type="RefSeq" id="WP_012684435.1">
    <property type="nucleotide sequence ID" value="NC_012491.1"/>
</dbReference>
<dbReference type="SMR" id="C0Z4E5"/>
<dbReference type="STRING" id="358681.BBR47_06950"/>
<dbReference type="KEGG" id="bbe:BBR47_06950"/>
<dbReference type="eggNOG" id="COG0064">
    <property type="taxonomic scope" value="Bacteria"/>
</dbReference>
<dbReference type="HOGENOM" id="CLU_019240_0_0_9"/>
<dbReference type="Proteomes" id="UP000001877">
    <property type="component" value="Chromosome"/>
</dbReference>
<dbReference type="GO" id="GO:0050566">
    <property type="term" value="F:asparaginyl-tRNA synthase (glutamine-hydrolyzing) activity"/>
    <property type="evidence" value="ECO:0007669"/>
    <property type="project" value="RHEA"/>
</dbReference>
<dbReference type="GO" id="GO:0005524">
    <property type="term" value="F:ATP binding"/>
    <property type="evidence" value="ECO:0007669"/>
    <property type="project" value="UniProtKB-KW"/>
</dbReference>
<dbReference type="GO" id="GO:0050567">
    <property type="term" value="F:glutaminyl-tRNA synthase (glutamine-hydrolyzing) activity"/>
    <property type="evidence" value="ECO:0007669"/>
    <property type="project" value="UniProtKB-UniRule"/>
</dbReference>
<dbReference type="GO" id="GO:0070681">
    <property type="term" value="P:glutaminyl-tRNAGln biosynthesis via transamidation"/>
    <property type="evidence" value="ECO:0007669"/>
    <property type="project" value="TreeGrafter"/>
</dbReference>
<dbReference type="GO" id="GO:0006412">
    <property type="term" value="P:translation"/>
    <property type="evidence" value="ECO:0007669"/>
    <property type="project" value="UniProtKB-UniRule"/>
</dbReference>
<dbReference type="FunFam" id="1.10.10.410:FF:000001">
    <property type="entry name" value="Aspartyl/glutamyl-tRNA(Asn/Gln) amidotransferase subunit B"/>
    <property type="match status" value="1"/>
</dbReference>
<dbReference type="FunFam" id="1.10.150.380:FF:000001">
    <property type="entry name" value="Aspartyl/glutamyl-tRNA(Asn/Gln) amidotransferase subunit B"/>
    <property type="match status" value="1"/>
</dbReference>
<dbReference type="Gene3D" id="1.10.10.410">
    <property type="match status" value="1"/>
</dbReference>
<dbReference type="Gene3D" id="1.10.150.380">
    <property type="entry name" value="GatB domain, N-terminal subdomain"/>
    <property type="match status" value="1"/>
</dbReference>
<dbReference type="HAMAP" id="MF_00121">
    <property type="entry name" value="GatB"/>
    <property type="match status" value="1"/>
</dbReference>
<dbReference type="InterPro" id="IPR017959">
    <property type="entry name" value="Asn/Gln-tRNA_amidoTrfase_suB/E"/>
</dbReference>
<dbReference type="InterPro" id="IPR006075">
    <property type="entry name" value="Asn/Gln-tRNA_Trfase_suB/E_cat"/>
</dbReference>
<dbReference type="InterPro" id="IPR018027">
    <property type="entry name" value="Asn/Gln_amidotransferase"/>
</dbReference>
<dbReference type="InterPro" id="IPR003789">
    <property type="entry name" value="Asn/Gln_tRNA_amidoTrase-B-like"/>
</dbReference>
<dbReference type="InterPro" id="IPR004413">
    <property type="entry name" value="GatB"/>
</dbReference>
<dbReference type="InterPro" id="IPR042114">
    <property type="entry name" value="GatB_C_1"/>
</dbReference>
<dbReference type="InterPro" id="IPR023168">
    <property type="entry name" value="GatB_Yqey_C_2"/>
</dbReference>
<dbReference type="InterPro" id="IPR017958">
    <property type="entry name" value="Gln-tRNA_amidoTrfase_suB_CS"/>
</dbReference>
<dbReference type="InterPro" id="IPR014746">
    <property type="entry name" value="Gln_synth/guanido_kin_cat_dom"/>
</dbReference>
<dbReference type="NCBIfam" id="TIGR00133">
    <property type="entry name" value="gatB"/>
    <property type="match status" value="1"/>
</dbReference>
<dbReference type="NCBIfam" id="NF004011">
    <property type="entry name" value="PRK05477.1-1"/>
    <property type="match status" value="1"/>
</dbReference>
<dbReference type="NCBIfam" id="NF004012">
    <property type="entry name" value="PRK05477.1-2"/>
    <property type="match status" value="1"/>
</dbReference>
<dbReference type="NCBIfam" id="NF004014">
    <property type="entry name" value="PRK05477.1-4"/>
    <property type="match status" value="1"/>
</dbReference>
<dbReference type="PANTHER" id="PTHR11659">
    <property type="entry name" value="GLUTAMYL-TRNA GLN AMIDOTRANSFERASE SUBUNIT B MITOCHONDRIAL AND PROKARYOTIC PET112-RELATED"/>
    <property type="match status" value="1"/>
</dbReference>
<dbReference type="PANTHER" id="PTHR11659:SF0">
    <property type="entry name" value="GLUTAMYL-TRNA(GLN) AMIDOTRANSFERASE SUBUNIT B, MITOCHONDRIAL"/>
    <property type="match status" value="1"/>
</dbReference>
<dbReference type="Pfam" id="PF02934">
    <property type="entry name" value="GatB_N"/>
    <property type="match status" value="1"/>
</dbReference>
<dbReference type="Pfam" id="PF02637">
    <property type="entry name" value="GatB_Yqey"/>
    <property type="match status" value="1"/>
</dbReference>
<dbReference type="SMART" id="SM00845">
    <property type="entry name" value="GatB_Yqey"/>
    <property type="match status" value="1"/>
</dbReference>
<dbReference type="SUPFAM" id="SSF89095">
    <property type="entry name" value="GatB/YqeY motif"/>
    <property type="match status" value="1"/>
</dbReference>
<dbReference type="SUPFAM" id="SSF55931">
    <property type="entry name" value="Glutamine synthetase/guanido kinase"/>
    <property type="match status" value="1"/>
</dbReference>
<dbReference type="PROSITE" id="PS01234">
    <property type="entry name" value="GATB"/>
    <property type="match status" value="1"/>
</dbReference>
<keyword id="KW-0067">ATP-binding</keyword>
<keyword id="KW-0436">Ligase</keyword>
<keyword id="KW-0547">Nucleotide-binding</keyword>
<keyword id="KW-0648">Protein biosynthesis</keyword>
<keyword id="KW-1185">Reference proteome</keyword>
<comment type="function">
    <text evidence="1">Allows the formation of correctly charged Asn-tRNA(Asn) or Gln-tRNA(Gln) through the transamidation of misacylated Asp-tRNA(Asn) or Glu-tRNA(Gln) in organisms which lack either or both of asparaginyl-tRNA or glutaminyl-tRNA synthetases. The reaction takes place in the presence of glutamine and ATP through an activated phospho-Asp-tRNA(Asn) or phospho-Glu-tRNA(Gln).</text>
</comment>
<comment type="catalytic activity">
    <reaction evidence="1">
        <text>L-glutamyl-tRNA(Gln) + L-glutamine + ATP + H2O = L-glutaminyl-tRNA(Gln) + L-glutamate + ADP + phosphate + H(+)</text>
        <dbReference type="Rhea" id="RHEA:17521"/>
        <dbReference type="Rhea" id="RHEA-COMP:9681"/>
        <dbReference type="Rhea" id="RHEA-COMP:9684"/>
        <dbReference type="ChEBI" id="CHEBI:15377"/>
        <dbReference type="ChEBI" id="CHEBI:15378"/>
        <dbReference type="ChEBI" id="CHEBI:29985"/>
        <dbReference type="ChEBI" id="CHEBI:30616"/>
        <dbReference type="ChEBI" id="CHEBI:43474"/>
        <dbReference type="ChEBI" id="CHEBI:58359"/>
        <dbReference type="ChEBI" id="CHEBI:78520"/>
        <dbReference type="ChEBI" id="CHEBI:78521"/>
        <dbReference type="ChEBI" id="CHEBI:456216"/>
    </reaction>
</comment>
<comment type="catalytic activity">
    <reaction evidence="1">
        <text>L-aspartyl-tRNA(Asn) + L-glutamine + ATP + H2O = L-asparaginyl-tRNA(Asn) + L-glutamate + ADP + phosphate + 2 H(+)</text>
        <dbReference type="Rhea" id="RHEA:14513"/>
        <dbReference type="Rhea" id="RHEA-COMP:9674"/>
        <dbReference type="Rhea" id="RHEA-COMP:9677"/>
        <dbReference type="ChEBI" id="CHEBI:15377"/>
        <dbReference type="ChEBI" id="CHEBI:15378"/>
        <dbReference type="ChEBI" id="CHEBI:29985"/>
        <dbReference type="ChEBI" id="CHEBI:30616"/>
        <dbReference type="ChEBI" id="CHEBI:43474"/>
        <dbReference type="ChEBI" id="CHEBI:58359"/>
        <dbReference type="ChEBI" id="CHEBI:78515"/>
        <dbReference type="ChEBI" id="CHEBI:78516"/>
        <dbReference type="ChEBI" id="CHEBI:456216"/>
    </reaction>
</comment>
<comment type="subunit">
    <text evidence="1">Heterotrimer of A, B and C subunits.</text>
</comment>
<comment type="similarity">
    <text evidence="1">Belongs to the GatB/GatE family. GatB subfamily.</text>
</comment>
<organism>
    <name type="scientific">Brevibacillus brevis (strain 47 / JCM 6285 / NBRC 100599)</name>
    <dbReference type="NCBI Taxonomy" id="358681"/>
    <lineage>
        <taxon>Bacteria</taxon>
        <taxon>Bacillati</taxon>
        <taxon>Bacillota</taxon>
        <taxon>Bacilli</taxon>
        <taxon>Bacillales</taxon>
        <taxon>Paenibacillaceae</taxon>
        <taxon>Brevibacillus</taxon>
    </lineage>
</organism>
<accession>C0Z4E5</accession>
<proteinExistence type="inferred from homology"/>
<name>GATB_BREBN</name>
<gene>
    <name evidence="1" type="primary">gatB</name>
    <name type="ordered locus">BBR47_06950</name>
</gene>